<name>RPOB1_NOCFA</name>
<keyword id="KW-0240">DNA-directed RNA polymerase</keyword>
<keyword id="KW-0548">Nucleotidyltransferase</keyword>
<keyword id="KW-1185">Reference proteome</keyword>
<keyword id="KW-0804">Transcription</keyword>
<keyword id="KW-0808">Transferase</keyword>
<comment type="function">
    <text evidence="1">DNA-dependent RNA polymerase catalyzes the transcription of DNA into RNA using the four ribonucleoside triphosphates as substrates.</text>
</comment>
<comment type="catalytic activity">
    <reaction evidence="1">
        <text>RNA(n) + a ribonucleoside 5'-triphosphate = RNA(n+1) + diphosphate</text>
        <dbReference type="Rhea" id="RHEA:21248"/>
        <dbReference type="Rhea" id="RHEA-COMP:14527"/>
        <dbReference type="Rhea" id="RHEA-COMP:17342"/>
        <dbReference type="ChEBI" id="CHEBI:33019"/>
        <dbReference type="ChEBI" id="CHEBI:61557"/>
        <dbReference type="ChEBI" id="CHEBI:140395"/>
        <dbReference type="EC" id="2.7.7.6"/>
    </reaction>
</comment>
<comment type="subunit">
    <text evidence="1">The RNAP catalytic core consists of 2 alpha, 1 beta, 1 beta' and 1 omega subunit. When a sigma factor is associated with the core the holoenzyme is formed, which can initiate transcription.</text>
</comment>
<comment type="similarity">
    <text evidence="1">Belongs to the RNA polymerase beta chain family.</text>
</comment>
<organism>
    <name type="scientific">Nocardia farcinica (strain IFM 10152)</name>
    <dbReference type="NCBI Taxonomy" id="247156"/>
    <lineage>
        <taxon>Bacteria</taxon>
        <taxon>Bacillati</taxon>
        <taxon>Actinomycetota</taxon>
        <taxon>Actinomycetes</taxon>
        <taxon>Mycobacteriales</taxon>
        <taxon>Nocardiaceae</taxon>
        <taxon>Nocardia</taxon>
    </lineage>
</organism>
<gene>
    <name evidence="1" type="primary">rpoB1</name>
    <name type="ordered locus">NFA_46460</name>
</gene>
<dbReference type="EC" id="2.7.7.6" evidence="1"/>
<dbReference type="EMBL" id="AP006618">
    <property type="protein sequence ID" value="BAD59497.1"/>
    <property type="molecule type" value="Genomic_DNA"/>
</dbReference>
<dbReference type="RefSeq" id="WP_011211181.1">
    <property type="nucleotide sequence ID" value="NC_006361.1"/>
</dbReference>
<dbReference type="SMR" id="Q5YQP4"/>
<dbReference type="STRING" id="247156.NFA_46460"/>
<dbReference type="GeneID" id="61135250"/>
<dbReference type="KEGG" id="nfa:NFA_46460"/>
<dbReference type="eggNOG" id="COG0085">
    <property type="taxonomic scope" value="Bacteria"/>
</dbReference>
<dbReference type="HOGENOM" id="CLU_000524_4_3_11"/>
<dbReference type="OrthoDB" id="9803954at2"/>
<dbReference type="Proteomes" id="UP000006820">
    <property type="component" value="Chromosome"/>
</dbReference>
<dbReference type="GO" id="GO:0000428">
    <property type="term" value="C:DNA-directed RNA polymerase complex"/>
    <property type="evidence" value="ECO:0007669"/>
    <property type="project" value="UniProtKB-KW"/>
</dbReference>
<dbReference type="GO" id="GO:0003677">
    <property type="term" value="F:DNA binding"/>
    <property type="evidence" value="ECO:0007669"/>
    <property type="project" value="UniProtKB-UniRule"/>
</dbReference>
<dbReference type="GO" id="GO:0003899">
    <property type="term" value="F:DNA-directed RNA polymerase activity"/>
    <property type="evidence" value="ECO:0007669"/>
    <property type="project" value="UniProtKB-UniRule"/>
</dbReference>
<dbReference type="GO" id="GO:0032549">
    <property type="term" value="F:ribonucleoside binding"/>
    <property type="evidence" value="ECO:0007669"/>
    <property type="project" value="InterPro"/>
</dbReference>
<dbReference type="GO" id="GO:0006351">
    <property type="term" value="P:DNA-templated transcription"/>
    <property type="evidence" value="ECO:0007669"/>
    <property type="project" value="UniProtKB-UniRule"/>
</dbReference>
<dbReference type="CDD" id="cd00653">
    <property type="entry name" value="RNA_pol_B_RPB2"/>
    <property type="match status" value="1"/>
</dbReference>
<dbReference type="FunFam" id="2.40.50.150:FF:000001">
    <property type="entry name" value="DNA-directed RNA polymerase subunit beta"/>
    <property type="match status" value="1"/>
</dbReference>
<dbReference type="Gene3D" id="2.40.50.100">
    <property type="match status" value="1"/>
</dbReference>
<dbReference type="Gene3D" id="2.40.50.150">
    <property type="match status" value="1"/>
</dbReference>
<dbReference type="Gene3D" id="3.90.1100.10">
    <property type="match status" value="1"/>
</dbReference>
<dbReference type="Gene3D" id="2.30.150.10">
    <property type="entry name" value="DNA-directed RNA polymerase, beta subunit, external 1 domain"/>
    <property type="match status" value="1"/>
</dbReference>
<dbReference type="Gene3D" id="2.40.270.10">
    <property type="entry name" value="DNA-directed RNA polymerase, subunit 2, domain 6"/>
    <property type="match status" value="1"/>
</dbReference>
<dbReference type="Gene3D" id="3.90.1800.10">
    <property type="entry name" value="RNA polymerase alpha subunit dimerisation domain"/>
    <property type="match status" value="1"/>
</dbReference>
<dbReference type="Gene3D" id="3.90.1110.10">
    <property type="entry name" value="RNA polymerase Rpb2, domain 2"/>
    <property type="match status" value="1"/>
</dbReference>
<dbReference type="HAMAP" id="MF_01321">
    <property type="entry name" value="RNApol_bact_RpoB"/>
    <property type="match status" value="1"/>
</dbReference>
<dbReference type="InterPro" id="IPR042107">
    <property type="entry name" value="DNA-dir_RNA_pol_bsu_ext_1_sf"/>
</dbReference>
<dbReference type="InterPro" id="IPR019462">
    <property type="entry name" value="DNA-dir_RNA_pol_bsu_external_1"/>
</dbReference>
<dbReference type="InterPro" id="IPR015712">
    <property type="entry name" value="DNA-dir_RNA_pol_su2"/>
</dbReference>
<dbReference type="InterPro" id="IPR007120">
    <property type="entry name" value="DNA-dir_RNAP_su2_dom"/>
</dbReference>
<dbReference type="InterPro" id="IPR037033">
    <property type="entry name" value="DNA-dir_RNAP_su2_hyb_sf"/>
</dbReference>
<dbReference type="InterPro" id="IPR010243">
    <property type="entry name" value="RNA_pol_bsu_bac"/>
</dbReference>
<dbReference type="InterPro" id="IPR007121">
    <property type="entry name" value="RNA_pol_bsu_CS"/>
</dbReference>
<dbReference type="InterPro" id="IPR007644">
    <property type="entry name" value="RNA_pol_bsu_protrusion"/>
</dbReference>
<dbReference type="InterPro" id="IPR007642">
    <property type="entry name" value="RNA_pol_Rpb2_2"/>
</dbReference>
<dbReference type="InterPro" id="IPR037034">
    <property type="entry name" value="RNA_pol_Rpb2_2_sf"/>
</dbReference>
<dbReference type="InterPro" id="IPR007645">
    <property type="entry name" value="RNA_pol_Rpb2_3"/>
</dbReference>
<dbReference type="InterPro" id="IPR007641">
    <property type="entry name" value="RNA_pol_Rpb2_7"/>
</dbReference>
<dbReference type="InterPro" id="IPR014724">
    <property type="entry name" value="RNA_pol_RPB2_OB-fold"/>
</dbReference>
<dbReference type="NCBIfam" id="NF001616">
    <property type="entry name" value="PRK00405.1"/>
    <property type="match status" value="1"/>
</dbReference>
<dbReference type="NCBIfam" id="TIGR02013">
    <property type="entry name" value="rpoB"/>
    <property type="match status" value="1"/>
</dbReference>
<dbReference type="PANTHER" id="PTHR20856">
    <property type="entry name" value="DNA-DIRECTED RNA POLYMERASE I SUBUNIT 2"/>
    <property type="match status" value="1"/>
</dbReference>
<dbReference type="Pfam" id="PF04563">
    <property type="entry name" value="RNA_pol_Rpb2_1"/>
    <property type="match status" value="1"/>
</dbReference>
<dbReference type="Pfam" id="PF04561">
    <property type="entry name" value="RNA_pol_Rpb2_2"/>
    <property type="match status" value="1"/>
</dbReference>
<dbReference type="Pfam" id="PF04565">
    <property type="entry name" value="RNA_pol_Rpb2_3"/>
    <property type="match status" value="1"/>
</dbReference>
<dbReference type="Pfam" id="PF10385">
    <property type="entry name" value="RNA_pol_Rpb2_45"/>
    <property type="match status" value="1"/>
</dbReference>
<dbReference type="Pfam" id="PF00562">
    <property type="entry name" value="RNA_pol_Rpb2_6"/>
    <property type="match status" value="1"/>
</dbReference>
<dbReference type="Pfam" id="PF04560">
    <property type="entry name" value="RNA_pol_Rpb2_7"/>
    <property type="match status" value="1"/>
</dbReference>
<dbReference type="SUPFAM" id="SSF64484">
    <property type="entry name" value="beta and beta-prime subunits of DNA dependent RNA-polymerase"/>
    <property type="match status" value="1"/>
</dbReference>
<dbReference type="PROSITE" id="PS01166">
    <property type="entry name" value="RNA_POL_BETA"/>
    <property type="match status" value="1"/>
</dbReference>
<proteinExistence type="inferred from homology"/>
<feature type="chain" id="PRO_0000224084" description="DNA-directed RNA polymerase subunit beta 1">
    <location>
        <begin position="1"/>
        <end position="1162"/>
    </location>
</feature>
<accession>Q5YQP4</accession>
<evidence type="ECO:0000255" key="1">
    <source>
        <dbReference type="HAMAP-Rule" id="MF_01321"/>
    </source>
</evidence>
<protein>
    <recommendedName>
        <fullName evidence="1">DNA-directed RNA polymerase subunit beta 1</fullName>
        <shortName evidence="1">RNAP subunit beta 1</shortName>
        <ecNumber evidence="1">2.7.7.6</ecNumber>
    </recommendedName>
    <alternativeName>
        <fullName evidence="1">RNA polymerase subunit beta 1</fullName>
    </alternativeName>
    <alternativeName>
        <fullName evidence="1">Transcriptase subunit beta 1</fullName>
    </alternativeName>
</protein>
<reference key="1">
    <citation type="journal article" date="2004" name="Proc. Natl. Acad. Sci. U.S.A.">
        <title>The complete genomic sequence of Nocardia farcinica IFM 10152.</title>
        <authorList>
            <person name="Ishikawa J."/>
            <person name="Yamashita A."/>
            <person name="Mikami Y."/>
            <person name="Hoshino Y."/>
            <person name="Kurita H."/>
            <person name="Hotta K."/>
            <person name="Shiba T."/>
            <person name="Hattori M."/>
        </authorList>
    </citation>
    <scope>NUCLEOTIDE SEQUENCE [LARGE SCALE GENOMIC DNA]</scope>
    <source>
        <strain>IFM 10152</strain>
    </source>
</reference>
<sequence>MLEGRIVTVSSRTESPLAAPGVPGAPRRLSFARIREPLAVPGLLDIQTESFGWLIGAPDWCARAAARGTEPVAGLAEVLAEISPIEDFAGTMSLTLSDPRFEEVKASVEECKDKDLTYAAPWFVTAEFVNNNTGEIKSQTVFMGDFPMMTAHGTFVVNGTERVVVSQLVRSPGVYFDHAIDKGSEKDVHSARVIPSRGAWLEFDVDKRDTLGVRIDRKRRQPVTVLLKALGWSAERIAERFGFAPLIMASLAKDNVAGTDDALLEIHRKLRPGEPPTKESAQNLLANLFFTEKRYDLARVGRYKIDKKLGLRAPGAPRVLTEDDIAATIEYLVRLHAGERTMIAPGGVEVPVEVDDIDHFGNRRVRTVGELIQNQIRVGLSRMERVVRERMTTQDVEAITPQSLMNIRPVVAAMKEFFGTSQLSQFMDQRNPLASLTNKRRLSALGPGGLSRERAGLEVRDVHYSHYGRMCPIETPEGPNIGLMGYLSVYARVNPFGFVETPYRRVVDGRVTDEVDYLTADEEDRHVVAQANEPLDAEGRFLAARIPVRRKNSEVELVDSAAVDYMDVSPRQMVSVATAMIPFLEHDDANRALMGANMQRQAVPLIRSEAPIVGTGMELRAAVDAGDVVVNEKAGVVEEVSADYVTVMADDGTRKSYRMRKFNRSNQGTCSNQRPIVDEGQRVEAGQVLADGPCTENGEMALGKNLLVAIMPWEGHNYEDAIILSQRLVEQDVLTSIHIEEHEIDARDTKLGAEEITRDIPNVSDEVLADLDERGIVRIGAEVRDGDILVGKVTPKGETELTPEERLLRAIFGEKAREVRDTSLKVPHGESGKVIGIRVFSREDDDDLPPGVNELVRVYVAQKRKIQDGDKLAGRHGNKGVIGKILPTEDMPFLPDGTPVDIILNTHGVPRRMNIGQILETHLGWIGKAGWKVEGNPEWAKDLPEEMWEAPADSNIATPVFDGAREEELTGLLGSTLPNRDGERMVDDNGKAVLFDGRSGEPFPYPVAVGYMYILKLHHLVDDKIHARSTGPYSMITQQPLGGKAQFGGQRFGEMECWAMQAYGAAYTLQELLTIKSDDVVGRVKVYEAIVKGDNIPEPGVPESFKVLLKELQALCLNVEVLSAGAAVELAHGVDDDHERTAANLGINLSRAESITETELSG</sequence>